<protein>
    <recommendedName>
        <fullName evidence="1">Methionyl-tRNA formyltransferase</fullName>
        <ecNumber evidence="1">2.1.2.9</ecNumber>
    </recommendedName>
</protein>
<organism>
    <name type="scientific">Mycobacterium tuberculosis (strain ATCC 25177 / H37Ra)</name>
    <dbReference type="NCBI Taxonomy" id="419947"/>
    <lineage>
        <taxon>Bacteria</taxon>
        <taxon>Bacillati</taxon>
        <taxon>Actinomycetota</taxon>
        <taxon>Actinomycetes</taxon>
        <taxon>Mycobacteriales</taxon>
        <taxon>Mycobacteriaceae</taxon>
        <taxon>Mycobacterium</taxon>
        <taxon>Mycobacterium tuberculosis complex</taxon>
    </lineage>
</organism>
<keyword id="KW-0648">Protein biosynthesis</keyword>
<keyword id="KW-1185">Reference proteome</keyword>
<keyword id="KW-0808">Transferase</keyword>
<dbReference type="EC" id="2.1.2.9" evidence="1"/>
<dbReference type="EMBL" id="CP000611">
    <property type="protein sequence ID" value="ABQ73158.1"/>
    <property type="molecule type" value="Genomic_DNA"/>
</dbReference>
<dbReference type="RefSeq" id="WP_003900336.1">
    <property type="nucleotide sequence ID" value="NZ_CP016972.1"/>
</dbReference>
<dbReference type="SMR" id="A5U2A8"/>
<dbReference type="GeneID" id="45425384"/>
<dbReference type="KEGG" id="mra:MRA_1415"/>
<dbReference type="eggNOG" id="COG0223">
    <property type="taxonomic scope" value="Bacteria"/>
</dbReference>
<dbReference type="HOGENOM" id="CLU_033347_2_0_11"/>
<dbReference type="Proteomes" id="UP000001988">
    <property type="component" value="Chromosome"/>
</dbReference>
<dbReference type="GO" id="GO:0005829">
    <property type="term" value="C:cytosol"/>
    <property type="evidence" value="ECO:0007669"/>
    <property type="project" value="TreeGrafter"/>
</dbReference>
<dbReference type="GO" id="GO:0004479">
    <property type="term" value="F:methionyl-tRNA formyltransferase activity"/>
    <property type="evidence" value="ECO:0007669"/>
    <property type="project" value="UniProtKB-UniRule"/>
</dbReference>
<dbReference type="CDD" id="cd08646">
    <property type="entry name" value="FMT_core_Met-tRNA-FMT_N"/>
    <property type="match status" value="1"/>
</dbReference>
<dbReference type="CDD" id="cd08704">
    <property type="entry name" value="Met_tRNA_FMT_C"/>
    <property type="match status" value="1"/>
</dbReference>
<dbReference type="FunFam" id="3.40.50.12230:FF:000001">
    <property type="entry name" value="Methionyl-tRNA formyltransferase"/>
    <property type="match status" value="1"/>
</dbReference>
<dbReference type="Gene3D" id="3.40.50.12230">
    <property type="match status" value="1"/>
</dbReference>
<dbReference type="HAMAP" id="MF_00182">
    <property type="entry name" value="Formyl_trans"/>
    <property type="match status" value="1"/>
</dbReference>
<dbReference type="InterPro" id="IPR005794">
    <property type="entry name" value="Fmt"/>
</dbReference>
<dbReference type="InterPro" id="IPR005793">
    <property type="entry name" value="Formyl_trans_C"/>
</dbReference>
<dbReference type="InterPro" id="IPR002376">
    <property type="entry name" value="Formyl_transf_N"/>
</dbReference>
<dbReference type="InterPro" id="IPR036477">
    <property type="entry name" value="Formyl_transf_N_sf"/>
</dbReference>
<dbReference type="InterPro" id="IPR011034">
    <property type="entry name" value="Formyl_transferase-like_C_sf"/>
</dbReference>
<dbReference type="InterPro" id="IPR044135">
    <property type="entry name" value="Met-tRNA-FMT_C"/>
</dbReference>
<dbReference type="InterPro" id="IPR041711">
    <property type="entry name" value="Met-tRNA-FMT_N"/>
</dbReference>
<dbReference type="NCBIfam" id="TIGR00460">
    <property type="entry name" value="fmt"/>
    <property type="match status" value="1"/>
</dbReference>
<dbReference type="PANTHER" id="PTHR11138">
    <property type="entry name" value="METHIONYL-TRNA FORMYLTRANSFERASE"/>
    <property type="match status" value="1"/>
</dbReference>
<dbReference type="PANTHER" id="PTHR11138:SF5">
    <property type="entry name" value="METHIONYL-TRNA FORMYLTRANSFERASE, MITOCHONDRIAL"/>
    <property type="match status" value="1"/>
</dbReference>
<dbReference type="Pfam" id="PF02911">
    <property type="entry name" value="Formyl_trans_C"/>
    <property type="match status" value="1"/>
</dbReference>
<dbReference type="Pfam" id="PF00551">
    <property type="entry name" value="Formyl_trans_N"/>
    <property type="match status" value="1"/>
</dbReference>
<dbReference type="SUPFAM" id="SSF50486">
    <property type="entry name" value="FMT C-terminal domain-like"/>
    <property type="match status" value="1"/>
</dbReference>
<dbReference type="SUPFAM" id="SSF53328">
    <property type="entry name" value="Formyltransferase"/>
    <property type="match status" value="1"/>
</dbReference>
<proteinExistence type="inferred from homology"/>
<feature type="chain" id="PRO_1000020105" description="Methionyl-tRNA formyltransferase">
    <location>
        <begin position="1"/>
        <end position="312"/>
    </location>
</feature>
<feature type="region of interest" description="Disordered" evidence="2">
    <location>
        <begin position="34"/>
        <end position="54"/>
    </location>
</feature>
<feature type="binding site" evidence="1">
    <location>
        <begin position="110"/>
        <end position="113"/>
    </location>
    <ligand>
        <name>(6S)-5,6,7,8-tetrahydrofolate</name>
        <dbReference type="ChEBI" id="CHEBI:57453"/>
    </ligand>
</feature>
<name>FMT_MYCTA</name>
<sequence>MRLVFAGTPEPALASLRRLIESPSHDVIAVLTRPDAASGRRGKPQPSPVAREAAERGIPVLRPSRPNSAEFVAELSDLAPECCAVVAYGALLGGPLLAVPPHGWVNLHFSLLPAWRGAAPVQAAIAAGDTITGATTFQIEPSLDSGPIYGVVTEVIQPTDTAGDLLKRLAVSGAALLSTTLDGIADQRLTPRPQPADGVSVAPKITVANARVRWDLPAAVVERRIRAVTPNPGAWTLIGDLRVKLGPVHLDAAHRPSKPLPPGGIHVERTSVWIGTGSEPVRLGQIQPPGKKLMNAADWARGARLDLAARAT</sequence>
<evidence type="ECO:0000255" key="1">
    <source>
        <dbReference type="HAMAP-Rule" id="MF_00182"/>
    </source>
</evidence>
<evidence type="ECO:0000256" key="2">
    <source>
        <dbReference type="SAM" id="MobiDB-lite"/>
    </source>
</evidence>
<gene>
    <name evidence="1" type="primary">fmt</name>
    <name type="ordered locus">MRA_1415</name>
</gene>
<comment type="function">
    <text evidence="1">Attaches a formyl group to the free amino group of methionyl-tRNA(fMet). The formyl group appears to play a dual role in the initiator identity of N-formylmethionyl-tRNA by promoting its recognition by IF2 and preventing the misappropriation of this tRNA by the elongation apparatus.</text>
</comment>
<comment type="catalytic activity">
    <reaction evidence="1">
        <text>L-methionyl-tRNA(fMet) + (6R)-10-formyltetrahydrofolate = N-formyl-L-methionyl-tRNA(fMet) + (6S)-5,6,7,8-tetrahydrofolate + H(+)</text>
        <dbReference type="Rhea" id="RHEA:24380"/>
        <dbReference type="Rhea" id="RHEA-COMP:9952"/>
        <dbReference type="Rhea" id="RHEA-COMP:9953"/>
        <dbReference type="ChEBI" id="CHEBI:15378"/>
        <dbReference type="ChEBI" id="CHEBI:57453"/>
        <dbReference type="ChEBI" id="CHEBI:78530"/>
        <dbReference type="ChEBI" id="CHEBI:78844"/>
        <dbReference type="ChEBI" id="CHEBI:195366"/>
        <dbReference type="EC" id="2.1.2.9"/>
    </reaction>
</comment>
<comment type="similarity">
    <text evidence="1">Belongs to the Fmt family.</text>
</comment>
<reference key="1">
    <citation type="journal article" date="2008" name="PLoS ONE">
        <title>Genetic basis of virulence attenuation revealed by comparative genomic analysis of Mycobacterium tuberculosis strain H37Ra versus H37Rv.</title>
        <authorList>
            <person name="Zheng H."/>
            <person name="Lu L."/>
            <person name="Wang B."/>
            <person name="Pu S."/>
            <person name="Zhang X."/>
            <person name="Zhu G."/>
            <person name="Shi W."/>
            <person name="Zhang L."/>
            <person name="Wang H."/>
            <person name="Wang S."/>
            <person name="Zhao G."/>
            <person name="Zhang Y."/>
        </authorList>
    </citation>
    <scope>NUCLEOTIDE SEQUENCE [LARGE SCALE GENOMIC DNA]</scope>
    <source>
        <strain>ATCC 25177 / H37Ra</strain>
    </source>
</reference>
<accession>A5U2A8</accession>